<name>PA2AC_CROVV</name>
<comment type="function">
    <text evidence="4">Snake venom phospholipase A2 (PLA2) that significantly inhibits ADP-induced platelet aggregation in platelet-rich plasma of human, rabbit and guinea pig. PLA2 catalyzes the calcium-dependent hydrolysis of the 2-acyl groups in 3-sn-phosphoglycerides.</text>
</comment>
<comment type="catalytic activity">
    <reaction evidence="2 3">
        <text>a 1,2-diacyl-sn-glycero-3-phosphocholine + H2O = a 1-acyl-sn-glycero-3-phosphocholine + a fatty acid + H(+)</text>
        <dbReference type="Rhea" id="RHEA:15801"/>
        <dbReference type="ChEBI" id="CHEBI:15377"/>
        <dbReference type="ChEBI" id="CHEBI:15378"/>
        <dbReference type="ChEBI" id="CHEBI:28868"/>
        <dbReference type="ChEBI" id="CHEBI:57643"/>
        <dbReference type="ChEBI" id="CHEBI:58168"/>
        <dbReference type="EC" id="3.1.1.4"/>
    </reaction>
</comment>
<comment type="cofactor">
    <cofactor evidence="4">
        <name>Ca(2+)</name>
        <dbReference type="ChEBI" id="CHEBI:29108"/>
    </cofactor>
</comment>
<comment type="subcellular location">
    <subcellularLocation>
        <location>Secreted</location>
    </subcellularLocation>
</comment>
<comment type="tissue specificity">
    <text>Expressed by the venom gland.</text>
</comment>
<comment type="PTM">
    <text evidence="1">Contains 7 disulfide bonds.</text>
</comment>
<comment type="mass spectrometry" mass="13817.0" method="Electrospray" evidence="4"/>
<comment type="similarity">
    <text evidence="5">Belongs to the phospholipase A2 family. Group II subfamily.</text>
</comment>
<sequence length="23" mass="2581">NLVQFELLIMKVAKRSGLLSYSA</sequence>
<reference key="1">
    <citation type="journal article" date="2003" name="Arch. Biochem. Biophys.">
        <title>Geographic variations, cloning, and functional analyses of the venom acidic phospholipases A2 of Crotalus viridis viridis.</title>
        <authorList>
            <person name="Tsai I.-H."/>
            <person name="Wang Y.-M."/>
            <person name="Chen Y.-H."/>
            <person name="Tu A.T."/>
        </authorList>
    </citation>
    <scope>PROTEIN SEQUENCE</scope>
    <scope>FUNCTION</scope>
    <scope>COFACTOR</scope>
    <scope>MASS SPECTROMETRY</scope>
    <source>
        <strain>Colorado</strain>
        <strain>South Dakota</strain>
        <strain>Texas</strain>
        <strain>Western Oklahoma</strain>
        <strain>Wyoming</strain>
        <tissue>Venom</tissue>
        <tissue>Venom gland</tissue>
    </source>
</reference>
<feature type="chain" id="PRO_0000418555" description="Acidic phospholipase A2 Cvv-E6c">
    <location>
        <begin position="1"/>
        <end position="23" status="greater than"/>
    </location>
</feature>
<feature type="non-terminal residue">
    <location>
        <position position="23"/>
    </location>
</feature>
<keyword id="KW-0106">Calcium</keyword>
<keyword id="KW-0903">Direct protein sequencing</keyword>
<keyword id="KW-1015">Disulfide bond</keyword>
<keyword id="KW-1199">Hemostasis impairing toxin</keyword>
<keyword id="KW-0378">Hydrolase</keyword>
<keyword id="KW-0442">Lipid degradation</keyword>
<keyword id="KW-0443">Lipid metabolism</keyword>
<keyword id="KW-0479">Metal-binding</keyword>
<keyword id="KW-1201">Platelet aggregation inhibiting toxin</keyword>
<keyword id="KW-0964">Secreted</keyword>
<keyword id="KW-0800">Toxin</keyword>
<organism>
    <name type="scientific">Crotalus viridis viridis</name>
    <name type="common">Prairie rattlesnake</name>
    <dbReference type="NCBI Taxonomy" id="8742"/>
    <lineage>
        <taxon>Eukaryota</taxon>
        <taxon>Metazoa</taxon>
        <taxon>Chordata</taxon>
        <taxon>Craniata</taxon>
        <taxon>Vertebrata</taxon>
        <taxon>Euteleostomi</taxon>
        <taxon>Lepidosauria</taxon>
        <taxon>Squamata</taxon>
        <taxon>Bifurcata</taxon>
        <taxon>Unidentata</taxon>
        <taxon>Episquamata</taxon>
        <taxon>Toxicofera</taxon>
        <taxon>Serpentes</taxon>
        <taxon>Colubroidea</taxon>
        <taxon>Viperidae</taxon>
        <taxon>Crotalinae</taxon>
        <taxon>Crotalus</taxon>
    </lineage>
</organism>
<dbReference type="EC" id="3.1.1.4"/>
<dbReference type="GO" id="GO:0005576">
    <property type="term" value="C:extracellular region"/>
    <property type="evidence" value="ECO:0007669"/>
    <property type="project" value="UniProtKB-SubCell"/>
</dbReference>
<dbReference type="GO" id="GO:0046872">
    <property type="term" value="F:metal ion binding"/>
    <property type="evidence" value="ECO:0007669"/>
    <property type="project" value="UniProtKB-KW"/>
</dbReference>
<dbReference type="GO" id="GO:0004623">
    <property type="term" value="F:phospholipase A2 activity"/>
    <property type="evidence" value="ECO:0007669"/>
    <property type="project" value="UniProtKB-EC"/>
</dbReference>
<dbReference type="GO" id="GO:0090729">
    <property type="term" value="F:toxin activity"/>
    <property type="evidence" value="ECO:0007669"/>
    <property type="project" value="UniProtKB-KW"/>
</dbReference>
<dbReference type="GO" id="GO:0016042">
    <property type="term" value="P:lipid catabolic process"/>
    <property type="evidence" value="ECO:0007669"/>
    <property type="project" value="UniProtKB-KW"/>
</dbReference>
<evidence type="ECO:0000250" key="1"/>
<evidence type="ECO:0000255" key="2">
    <source>
        <dbReference type="PROSITE-ProRule" id="PRU10035"/>
    </source>
</evidence>
<evidence type="ECO:0000255" key="3">
    <source>
        <dbReference type="PROSITE-ProRule" id="PRU10036"/>
    </source>
</evidence>
<evidence type="ECO:0000269" key="4">
    <source>
    </source>
</evidence>
<evidence type="ECO:0000305" key="5"/>
<accession>P0DJM5</accession>
<proteinExistence type="evidence at protein level"/>
<protein>
    <recommendedName>
        <fullName>Acidic phospholipase A2 Cvv-E6c</fullName>
        <shortName>svPLA2</shortName>
        <ecNumber>3.1.1.4</ecNumber>
    </recommendedName>
    <alternativeName>
        <fullName>Phosphatidylcholine 2-acylhydrolase</fullName>
    </alternativeName>
</protein>